<organism>
    <name type="scientific">Pseudomonas savastanoi pv. phaseolicola (strain 1448A / Race 6)</name>
    <name type="common">Pseudomonas syringae pv. phaseolicola (strain 1448A / Race 6)</name>
    <dbReference type="NCBI Taxonomy" id="264730"/>
    <lineage>
        <taxon>Bacteria</taxon>
        <taxon>Pseudomonadati</taxon>
        <taxon>Pseudomonadota</taxon>
        <taxon>Gammaproteobacteria</taxon>
        <taxon>Pseudomonadales</taxon>
        <taxon>Pseudomonadaceae</taxon>
        <taxon>Pseudomonas</taxon>
    </lineage>
</organism>
<dbReference type="EC" id="7.6.2.7" evidence="1"/>
<dbReference type="EMBL" id="CP000058">
    <property type="protein sequence ID" value="AAZ35553.1"/>
    <property type="molecule type" value="Genomic_DNA"/>
</dbReference>
<dbReference type="RefSeq" id="WP_004655059.1">
    <property type="nucleotide sequence ID" value="NC_005773.3"/>
</dbReference>
<dbReference type="SMR" id="Q48C94"/>
<dbReference type="KEGG" id="psp:PSPPH_4909"/>
<dbReference type="eggNOG" id="COG4525">
    <property type="taxonomic scope" value="Bacteria"/>
</dbReference>
<dbReference type="HOGENOM" id="CLU_000604_1_22_6"/>
<dbReference type="Proteomes" id="UP000000551">
    <property type="component" value="Chromosome"/>
</dbReference>
<dbReference type="GO" id="GO:0005886">
    <property type="term" value="C:plasma membrane"/>
    <property type="evidence" value="ECO:0007669"/>
    <property type="project" value="UniProtKB-SubCell"/>
</dbReference>
<dbReference type="GO" id="GO:0015411">
    <property type="term" value="F:ABC-type taurine transporter transporter activity"/>
    <property type="evidence" value="ECO:0007669"/>
    <property type="project" value="UniProtKB-EC"/>
</dbReference>
<dbReference type="GO" id="GO:0005524">
    <property type="term" value="F:ATP binding"/>
    <property type="evidence" value="ECO:0007669"/>
    <property type="project" value="UniProtKB-KW"/>
</dbReference>
<dbReference type="GO" id="GO:0016887">
    <property type="term" value="F:ATP hydrolysis activity"/>
    <property type="evidence" value="ECO:0007669"/>
    <property type="project" value="InterPro"/>
</dbReference>
<dbReference type="CDD" id="cd03293">
    <property type="entry name" value="ABC_NrtD_SsuB_transporters"/>
    <property type="match status" value="1"/>
</dbReference>
<dbReference type="Gene3D" id="3.40.50.300">
    <property type="entry name" value="P-loop containing nucleotide triphosphate hydrolases"/>
    <property type="match status" value="1"/>
</dbReference>
<dbReference type="InterPro" id="IPR003593">
    <property type="entry name" value="AAA+_ATPase"/>
</dbReference>
<dbReference type="InterPro" id="IPR003439">
    <property type="entry name" value="ABC_transporter-like_ATP-bd"/>
</dbReference>
<dbReference type="InterPro" id="IPR017871">
    <property type="entry name" value="ABC_transporter-like_CS"/>
</dbReference>
<dbReference type="InterPro" id="IPR050166">
    <property type="entry name" value="ABC_transporter_ATP-bind"/>
</dbReference>
<dbReference type="InterPro" id="IPR027417">
    <property type="entry name" value="P-loop_NTPase"/>
</dbReference>
<dbReference type="NCBIfam" id="NF008421">
    <property type="entry name" value="PRK11248.1"/>
    <property type="match status" value="1"/>
</dbReference>
<dbReference type="PANTHER" id="PTHR42788:SF18">
    <property type="entry name" value="TAURINE IMPORT ATP-BINDING PROTEIN TAUB"/>
    <property type="match status" value="1"/>
</dbReference>
<dbReference type="PANTHER" id="PTHR42788">
    <property type="entry name" value="TAURINE IMPORT ATP-BINDING PROTEIN-RELATED"/>
    <property type="match status" value="1"/>
</dbReference>
<dbReference type="Pfam" id="PF00005">
    <property type="entry name" value="ABC_tran"/>
    <property type="match status" value="1"/>
</dbReference>
<dbReference type="SMART" id="SM00382">
    <property type="entry name" value="AAA"/>
    <property type="match status" value="1"/>
</dbReference>
<dbReference type="SUPFAM" id="SSF52540">
    <property type="entry name" value="P-loop containing nucleoside triphosphate hydrolases"/>
    <property type="match status" value="1"/>
</dbReference>
<dbReference type="PROSITE" id="PS00211">
    <property type="entry name" value="ABC_TRANSPORTER_1"/>
    <property type="match status" value="1"/>
</dbReference>
<dbReference type="PROSITE" id="PS50893">
    <property type="entry name" value="ABC_TRANSPORTER_2"/>
    <property type="match status" value="1"/>
</dbReference>
<dbReference type="PROSITE" id="PS51250">
    <property type="entry name" value="TAUB"/>
    <property type="match status" value="1"/>
</dbReference>
<proteinExistence type="inferred from homology"/>
<accession>Q48C94</accession>
<gene>
    <name evidence="1" type="primary">tauB</name>
    <name type="ordered locus">PSPPH_4909</name>
</gene>
<keyword id="KW-0067">ATP-binding</keyword>
<keyword id="KW-0997">Cell inner membrane</keyword>
<keyword id="KW-1003">Cell membrane</keyword>
<keyword id="KW-0472">Membrane</keyword>
<keyword id="KW-0547">Nucleotide-binding</keyword>
<keyword id="KW-1278">Translocase</keyword>
<keyword id="KW-0813">Transport</keyword>
<comment type="function">
    <text evidence="1">Part of the ABC transporter complex TauABC involved in taurine import. Responsible for energy coupling to the transport system.</text>
</comment>
<comment type="catalytic activity">
    <reaction evidence="1">
        <text>taurine(out) + ATP + H2O = taurine(in) + ADP + phosphate + H(+)</text>
        <dbReference type="Rhea" id="RHEA:14613"/>
        <dbReference type="ChEBI" id="CHEBI:15377"/>
        <dbReference type="ChEBI" id="CHEBI:15378"/>
        <dbReference type="ChEBI" id="CHEBI:30616"/>
        <dbReference type="ChEBI" id="CHEBI:43474"/>
        <dbReference type="ChEBI" id="CHEBI:456216"/>
        <dbReference type="ChEBI" id="CHEBI:507393"/>
        <dbReference type="EC" id="7.6.2.7"/>
    </reaction>
</comment>
<comment type="subunit">
    <text evidence="1">The complex is composed of two ATP-binding proteins (TauB), two transmembrane proteins (TauC) and a solute-binding protein (TauA).</text>
</comment>
<comment type="subcellular location">
    <subcellularLocation>
        <location evidence="1">Cell inner membrane</location>
        <topology evidence="1">Peripheral membrane protein</topology>
    </subcellularLocation>
</comment>
<comment type="similarity">
    <text evidence="1">Belongs to the ABC transporter superfamily. Taurine importer (TC 3.A.1.17.1) family.</text>
</comment>
<protein>
    <recommendedName>
        <fullName evidence="1">Taurine import ATP-binding protein TauB</fullName>
        <ecNumber evidence="1">7.6.2.7</ecNumber>
    </recommendedName>
</protein>
<reference key="1">
    <citation type="journal article" date="2005" name="J. Bacteriol.">
        <title>Whole-genome sequence analysis of Pseudomonas syringae pv. phaseolicola 1448A reveals divergence among pathovars in genes involved in virulence and transposition.</title>
        <authorList>
            <person name="Joardar V."/>
            <person name="Lindeberg M."/>
            <person name="Jackson R.W."/>
            <person name="Selengut J."/>
            <person name="Dodson R."/>
            <person name="Brinkac L.M."/>
            <person name="Daugherty S.C."/>
            <person name="DeBoy R.T."/>
            <person name="Durkin A.S."/>
            <person name="Gwinn Giglio M."/>
            <person name="Madupu R."/>
            <person name="Nelson W.C."/>
            <person name="Rosovitz M.J."/>
            <person name="Sullivan S.A."/>
            <person name="Crabtree J."/>
            <person name="Creasy T."/>
            <person name="Davidsen T.M."/>
            <person name="Haft D.H."/>
            <person name="Zafar N."/>
            <person name="Zhou L."/>
            <person name="Halpin R."/>
            <person name="Holley T."/>
            <person name="Khouri H.M."/>
            <person name="Feldblyum T.V."/>
            <person name="White O."/>
            <person name="Fraser C.M."/>
            <person name="Chatterjee A.K."/>
            <person name="Cartinhour S."/>
            <person name="Schneider D."/>
            <person name="Mansfield J.W."/>
            <person name="Collmer A."/>
            <person name="Buell R."/>
        </authorList>
    </citation>
    <scope>NUCLEOTIDE SEQUENCE [LARGE SCALE GENOMIC DNA]</scope>
    <source>
        <strain>1448A / Race 6</strain>
    </source>
</reference>
<evidence type="ECO:0000255" key="1">
    <source>
        <dbReference type="HAMAP-Rule" id="MF_01714"/>
    </source>
</evidence>
<sequence length="261" mass="28499">MALLQLERIGAQYPGAAAPVLADINLSLGPQQLLVALGPSGSGKTSLLNLIAGFIKPGSGRITLDGIPVEGPSAERGVVFQDDALLPWQNVLANVAFGLELAGVGRLERETRAREMLALVDLAGFDQRRIWQLSGGQRQRVGLARALAADPRILLMDEPFGALDAFTREQMQELLLQVWQRTAKPVFLITHDIEEAVFLATDLVLLAPNPGRIAEHLHLDFGRRYAAGESARAIKSDPRFIETREHVLASVFSQRTREQCV</sequence>
<feature type="chain" id="PRO_0000275837" description="Taurine import ATP-binding protein TauB">
    <location>
        <begin position="1"/>
        <end position="261"/>
    </location>
</feature>
<feature type="domain" description="ABC transporter" evidence="1">
    <location>
        <begin position="4"/>
        <end position="233"/>
    </location>
</feature>
<feature type="binding site" evidence="1">
    <location>
        <begin position="38"/>
        <end position="45"/>
    </location>
    <ligand>
        <name>ATP</name>
        <dbReference type="ChEBI" id="CHEBI:30616"/>
    </ligand>
</feature>
<name>TAUB_PSE14</name>